<keyword id="KW-0285">Flavoprotein</keyword>
<keyword id="KW-0288">FMN</keyword>
<keyword id="KW-0520">NAD</keyword>
<keyword id="KW-0521">NADP</keyword>
<keyword id="KW-0547">Nucleotide-binding</keyword>
<keyword id="KW-0560">Oxidoreductase</keyword>
<keyword id="KW-1185">Reference proteome</keyword>
<name>NQOR_METSB</name>
<evidence type="ECO:0000255" key="1">
    <source>
        <dbReference type="HAMAP-Rule" id="MF_01017"/>
    </source>
</evidence>
<proteinExistence type="inferred from homology"/>
<reference key="1">
    <citation type="journal article" date="2010" name="J. Bacteriol.">
        <title>Complete genome sequence of the aerobic facultative methanotroph Methylocella silvestris BL2.</title>
        <authorList>
            <person name="Chen Y."/>
            <person name="Crombie A."/>
            <person name="Rahman M.T."/>
            <person name="Dedysh S.N."/>
            <person name="Liesack W."/>
            <person name="Stott M.B."/>
            <person name="Alam M."/>
            <person name="Theisen A.R."/>
            <person name="Murrell J.C."/>
            <person name="Dunfield P.F."/>
        </authorList>
    </citation>
    <scope>NUCLEOTIDE SEQUENCE [LARGE SCALE GENOMIC DNA]</scope>
    <source>
        <strain>DSM 15510 / CIP 108128 / LMG 27833 / NCIMB 13906 / BL2</strain>
    </source>
</reference>
<feature type="chain" id="PRO_1000149012" description="NAD(P)H dehydrogenase (quinone)">
    <location>
        <begin position="1"/>
        <end position="199"/>
    </location>
</feature>
<feature type="domain" description="Flavodoxin-like" evidence="1">
    <location>
        <begin position="4"/>
        <end position="190"/>
    </location>
</feature>
<feature type="binding site" evidence="1">
    <location>
        <begin position="10"/>
        <end position="15"/>
    </location>
    <ligand>
        <name>FMN</name>
        <dbReference type="ChEBI" id="CHEBI:58210"/>
    </ligand>
</feature>
<feature type="binding site" evidence="1">
    <location>
        <position position="12"/>
    </location>
    <ligand>
        <name>NAD(+)</name>
        <dbReference type="ChEBI" id="CHEBI:57540"/>
    </ligand>
</feature>
<feature type="binding site" evidence="1">
    <location>
        <begin position="78"/>
        <end position="80"/>
    </location>
    <ligand>
        <name>FMN</name>
        <dbReference type="ChEBI" id="CHEBI:58210"/>
    </ligand>
</feature>
<feature type="binding site" evidence="1">
    <location>
        <position position="98"/>
    </location>
    <ligand>
        <name>substrate</name>
    </ligand>
</feature>
<feature type="binding site" evidence="1">
    <location>
        <begin position="113"/>
        <end position="119"/>
    </location>
    <ligand>
        <name>FMN</name>
        <dbReference type="ChEBI" id="CHEBI:58210"/>
    </ligand>
</feature>
<feature type="binding site" evidence="1">
    <location>
        <position position="134"/>
    </location>
    <ligand>
        <name>FMN</name>
        <dbReference type="ChEBI" id="CHEBI:58210"/>
    </ligand>
</feature>
<sequence>MAKVLVLYYSAYGHIEKMAEAVAEGAREAGAEVDIKRVPELVPLEIAQKSHFKLDQAAPVATIADLEHYDAIIVGTGTRFGRMSSQMANFLDQAGGLWMRGALNGKVGAAFTSTATQHGGQEVTLFSIITNLLHFGLVIVGLDYGFAGQGRLDEITGGSPYGATTIAASDGSRQPSETELAGARYQGRRVAEVAGKLKG</sequence>
<gene>
    <name type="ordered locus">Msil_3216</name>
</gene>
<protein>
    <recommendedName>
        <fullName evidence="1">NAD(P)H dehydrogenase (quinone)</fullName>
        <ecNumber evidence="1">1.6.5.2</ecNumber>
    </recommendedName>
    <alternativeName>
        <fullName>Flavoprotein WrbA</fullName>
    </alternativeName>
    <alternativeName>
        <fullName evidence="1">NAD(P)H:quinone oxidoreductase</fullName>
        <shortName evidence="1">NQO</shortName>
    </alternativeName>
</protein>
<dbReference type="EC" id="1.6.5.2" evidence="1"/>
<dbReference type="EMBL" id="CP001280">
    <property type="protein sequence ID" value="ACK52123.1"/>
    <property type="molecule type" value="Genomic_DNA"/>
</dbReference>
<dbReference type="RefSeq" id="WP_012592192.1">
    <property type="nucleotide sequence ID" value="NC_011666.1"/>
</dbReference>
<dbReference type="SMR" id="B8EMJ5"/>
<dbReference type="STRING" id="395965.Msil_3216"/>
<dbReference type="KEGG" id="msl:Msil_3216"/>
<dbReference type="eggNOG" id="COG0655">
    <property type="taxonomic scope" value="Bacteria"/>
</dbReference>
<dbReference type="HOGENOM" id="CLU_051402_0_2_5"/>
<dbReference type="OrthoDB" id="9801479at2"/>
<dbReference type="Proteomes" id="UP000002257">
    <property type="component" value="Chromosome"/>
</dbReference>
<dbReference type="GO" id="GO:0016020">
    <property type="term" value="C:membrane"/>
    <property type="evidence" value="ECO:0007669"/>
    <property type="project" value="TreeGrafter"/>
</dbReference>
<dbReference type="GO" id="GO:0050660">
    <property type="term" value="F:flavin adenine dinucleotide binding"/>
    <property type="evidence" value="ECO:0007669"/>
    <property type="project" value="UniProtKB-UniRule"/>
</dbReference>
<dbReference type="GO" id="GO:0010181">
    <property type="term" value="F:FMN binding"/>
    <property type="evidence" value="ECO:0007669"/>
    <property type="project" value="InterPro"/>
</dbReference>
<dbReference type="GO" id="GO:0051287">
    <property type="term" value="F:NAD binding"/>
    <property type="evidence" value="ECO:0007669"/>
    <property type="project" value="UniProtKB-UniRule"/>
</dbReference>
<dbReference type="GO" id="GO:0050136">
    <property type="term" value="F:NADH:ubiquinone reductase (non-electrogenic) activity"/>
    <property type="evidence" value="ECO:0007669"/>
    <property type="project" value="RHEA"/>
</dbReference>
<dbReference type="GO" id="GO:0050661">
    <property type="term" value="F:NADP binding"/>
    <property type="evidence" value="ECO:0007669"/>
    <property type="project" value="UniProtKB-UniRule"/>
</dbReference>
<dbReference type="GO" id="GO:0008753">
    <property type="term" value="F:NADPH dehydrogenase (quinone) activity"/>
    <property type="evidence" value="ECO:0007669"/>
    <property type="project" value="RHEA"/>
</dbReference>
<dbReference type="FunFam" id="3.40.50.360:FF:000001">
    <property type="entry name" value="NAD(P)H dehydrogenase (Quinone) FQR1-like"/>
    <property type="match status" value="1"/>
</dbReference>
<dbReference type="Gene3D" id="3.40.50.360">
    <property type="match status" value="1"/>
</dbReference>
<dbReference type="HAMAP" id="MF_01017">
    <property type="entry name" value="NQOR"/>
    <property type="match status" value="1"/>
</dbReference>
<dbReference type="InterPro" id="IPR008254">
    <property type="entry name" value="Flavodoxin/NO_synth"/>
</dbReference>
<dbReference type="InterPro" id="IPR029039">
    <property type="entry name" value="Flavoprotein-like_sf"/>
</dbReference>
<dbReference type="InterPro" id="IPR010089">
    <property type="entry name" value="Flavoprotein_WrbA-like"/>
</dbReference>
<dbReference type="InterPro" id="IPR005025">
    <property type="entry name" value="FMN_Rdtase-like_dom"/>
</dbReference>
<dbReference type="InterPro" id="IPR037513">
    <property type="entry name" value="NQO"/>
</dbReference>
<dbReference type="NCBIfam" id="TIGR01755">
    <property type="entry name" value="flav_wrbA"/>
    <property type="match status" value="1"/>
</dbReference>
<dbReference type="NCBIfam" id="NF002999">
    <property type="entry name" value="PRK03767.1"/>
    <property type="match status" value="1"/>
</dbReference>
<dbReference type="PANTHER" id="PTHR30546">
    <property type="entry name" value="FLAVODOXIN-RELATED PROTEIN WRBA-RELATED"/>
    <property type="match status" value="1"/>
</dbReference>
<dbReference type="PANTHER" id="PTHR30546:SF23">
    <property type="entry name" value="FLAVOPROTEIN-LIKE PROTEIN YCP4-RELATED"/>
    <property type="match status" value="1"/>
</dbReference>
<dbReference type="Pfam" id="PF03358">
    <property type="entry name" value="FMN_red"/>
    <property type="match status" value="1"/>
</dbReference>
<dbReference type="SUPFAM" id="SSF52218">
    <property type="entry name" value="Flavoproteins"/>
    <property type="match status" value="1"/>
</dbReference>
<dbReference type="PROSITE" id="PS50902">
    <property type="entry name" value="FLAVODOXIN_LIKE"/>
    <property type="match status" value="1"/>
</dbReference>
<comment type="catalytic activity">
    <reaction evidence="1">
        <text>a quinone + NADH + H(+) = a quinol + NAD(+)</text>
        <dbReference type="Rhea" id="RHEA:46160"/>
        <dbReference type="ChEBI" id="CHEBI:15378"/>
        <dbReference type="ChEBI" id="CHEBI:24646"/>
        <dbReference type="ChEBI" id="CHEBI:57540"/>
        <dbReference type="ChEBI" id="CHEBI:57945"/>
        <dbReference type="ChEBI" id="CHEBI:132124"/>
        <dbReference type="EC" id="1.6.5.2"/>
    </reaction>
</comment>
<comment type="catalytic activity">
    <reaction evidence="1">
        <text>a quinone + NADPH + H(+) = a quinol + NADP(+)</text>
        <dbReference type="Rhea" id="RHEA:46164"/>
        <dbReference type="ChEBI" id="CHEBI:15378"/>
        <dbReference type="ChEBI" id="CHEBI:24646"/>
        <dbReference type="ChEBI" id="CHEBI:57783"/>
        <dbReference type="ChEBI" id="CHEBI:58349"/>
        <dbReference type="ChEBI" id="CHEBI:132124"/>
        <dbReference type="EC" id="1.6.5.2"/>
    </reaction>
</comment>
<comment type="cofactor">
    <cofactor evidence="1">
        <name>FMN</name>
        <dbReference type="ChEBI" id="CHEBI:58210"/>
    </cofactor>
    <text evidence="1">Binds 1 FMN per monomer.</text>
</comment>
<comment type="similarity">
    <text evidence="1">Belongs to the WrbA family.</text>
</comment>
<accession>B8EMJ5</accession>
<organism>
    <name type="scientific">Methylocella silvestris (strain DSM 15510 / CIP 108128 / LMG 27833 / NCIMB 13906 / BL2)</name>
    <dbReference type="NCBI Taxonomy" id="395965"/>
    <lineage>
        <taxon>Bacteria</taxon>
        <taxon>Pseudomonadati</taxon>
        <taxon>Pseudomonadota</taxon>
        <taxon>Alphaproteobacteria</taxon>
        <taxon>Hyphomicrobiales</taxon>
        <taxon>Beijerinckiaceae</taxon>
        <taxon>Methylocella</taxon>
    </lineage>
</organism>